<reference key="1">
    <citation type="journal article" date="1996" name="Biochem. J.">
        <title>Biotin carboxyl carrier protein and carboxyltransferase subunits of the multi-subunit form of acetyl-CoA carboxylase from Brassica napus: cloning and analysis of expression during oilseed rape embryogenesis.</title>
        <authorList>
            <person name="Elborough K.M."/>
            <person name="Winz R."/>
            <person name="Deka R.K."/>
            <person name="Markham J.E."/>
            <person name="White A.J."/>
            <person name="Rawsthorne S."/>
            <person name="Slabas A.R."/>
        </authorList>
    </citation>
    <scope>NUCLEOTIDE SEQUENCE [GENOMIC DNA]</scope>
    <source>
        <strain>cv. Jet neuf</strain>
    </source>
</reference>
<reference key="2">
    <citation type="journal article" date="2001" name="J. Biol. Chem.">
        <title>Chloroplast RNA editing required for functional acetyl-CoA carboxylase in plants.</title>
        <authorList>
            <person name="Sasaki Y."/>
            <person name="Kozaki A."/>
            <person name="Ohmori A."/>
            <person name="Iguchi H."/>
            <person name="Nagano Y."/>
        </authorList>
    </citation>
    <scope>RNA EDITING</scope>
</reference>
<comment type="function">
    <text evidence="2">Component of the acetyl coenzyme A carboxylase (ACC) complex. Biotin carboxylase (BC) catalyzes the carboxylation of biotin on its carrier protein (BCCP) and then the CO(2) group is transferred by the transcarboxylase to acetyl-CoA to form malonyl-CoA.</text>
</comment>
<comment type="catalytic activity">
    <reaction evidence="2">
        <text>N(6)-carboxybiotinyl-L-lysyl-[protein] + acetyl-CoA = N(6)-biotinyl-L-lysyl-[protein] + malonyl-CoA</text>
        <dbReference type="Rhea" id="RHEA:54728"/>
        <dbReference type="Rhea" id="RHEA-COMP:10505"/>
        <dbReference type="Rhea" id="RHEA-COMP:10506"/>
        <dbReference type="ChEBI" id="CHEBI:57288"/>
        <dbReference type="ChEBI" id="CHEBI:57384"/>
        <dbReference type="ChEBI" id="CHEBI:83144"/>
        <dbReference type="ChEBI" id="CHEBI:83145"/>
        <dbReference type="EC" id="2.1.3.15"/>
    </reaction>
</comment>
<comment type="cofactor">
    <cofactor evidence="2">
        <name>Zn(2+)</name>
        <dbReference type="ChEBI" id="CHEBI:29105"/>
    </cofactor>
    <text evidence="2">Binds 1 zinc ion per subunit.</text>
</comment>
<comment type="pathway">
    <text evidence="2">Lipid metabolism; malonyl-CoA biosynthesis; malonyl-CoA from acetyl-CoA: step 1/1.</text>
</comment>
<comment type="subunit">
    <text evidence="1">Acetyl-CoA carboxylase is a heterohexamer composed of biotin carboxyl carrier protein, biotin carboxylase and 2 subunits each of ACCase subunit alpha and ACCase plastid-coded subunit beta (accD).</text>
</comment>
<comment type="subcellular location">
    <subcellularLocation>
        <location evidence="2">Plastid</location>
        <location evidence="2">Chloroplast stroma</location>
    </subcellularLocation>
</comment>
<comment type="RNA editing">
    <location>
        <position position="263" evidence="4"/>
    </location>
</comment>
<comment type="similarity">
    <text evidence="2">Belongs to the AccD/PCCB family.</text>
</comment>
<evidence type="ECO:0000250" key="1"/>
<evidence type="ECO:0000255" key="2">
    <source>
        <dbReference type="HAMAP-Rule" id="MF_01395"/>
    </source>
</evidence>
<evidence type="ECO:0000255" key="3">
    <source>
        <dbReference type="PROSITE-ProRule" id="PRU01136"/>
    </source>
</evidence>
<evidence type="ECO:0000269" key="4">
    <source>
    </source>
</evidence>
<feature type="chain" id="PRO_0000199781" description="Acetyl-coenzyme A carboxylase carboxyl transferase subunit beta, chloroplastic">
    <location>
        <begin position="1"/>
        <end position="489"/>
    </location>
</feature>
<feature type="domain" description="CoA carboxyltransferase N-terminal" evidence="3">
    <location>
        <begin position="225"/>
        <end position="489"/>
    </location>
</feature>
<feature type="zinc finger region" description="C4-type" evidence="2">
    <location>
        <begin position="229"/>
        <end position="248"/>
    </location>
</feature>
<feature type="binding site" evidence="2">
    <location>
        <position position="229"/>
    </location>
    <ligand>
        <name>Zn(2+)</name>
        <dbReference type="ChEBI" id="CHEBI:29105"/>
    </ligand>
</feature>
<feature type="binding site" evidence="2">
    <location>
        <position position="232"/>
    </location>
    <ligand>
        <name>Zn(2+)</name>
        <dbReference type="ChEBI" id="CHEBI:29105"/>
    </ligand>
</feature>
<feature type="binding site" evidence="2">
    <location>
        <position position="245"/>
    </location>
    <ligand>
        <name>Zn(2+)</name>
        <dbReference type="ChEBI" id="CHEBI:29105"/>
    </ligand>
</feature>
<feature type="binding site" evidence="2">
    <location>
        <position position="248"/>
    </location>
    <ligand>
        <name>Zn(2+)</name>
        <dbReference type="ChEBI" id="CHEBI:29105"/>
    </ligand>
</feature>
<dbReference type="EC" id="2.1.3.15" evidence="2"/>
<dbReference type="EMBL" id="Z50868">
    <property type="protein sequence ID" value="CAA90747.1"/>
    <property type="status" value="ALT_SEQ"/>
    <property type="molecule type" value="Genomic_DNA"/>
</dbReference>
<dbReference type="PIR" id="S66564">
    <property type="entry name" value="S66564"/>
</dbReference>
<dbReference type="SMR" id="P48937"/>
<dbReference type="UniPathway" id="UPA00655">
    <property type="reaction ID" value="UER00711"/>
</dbReference>
<dbReference type="GO" id="GO:0009317">
    <property type="term" value="C:acetyl-CoA carboxylase complex"/>
    <property type="evidence" value="ECO:0007669"/>
    <property type="project" value="InterPro"/>
</dbReference>
<dbReference type="GO" id="GO:0009570">
    <property type="term" value="C:chloroplast stroma"/>
    <property type="evidence" value="ECO:0007669"/>
    <property type="project" value="UniProtKB-SubCell"/>
</dbReference>
<dbReference type="GO" id="GO:0003989">
    <property type="term" value="F:acetyl-CoA carboxylase activity"/>
    <property type="evidence" value="ECO:0007669"/>
    <property type="project" value="InterPro"/>
</dbReference>
<dbReference type="GO" id="GO:0005524">
    <property type="term" value="F:ATP binding"/>
    <property type="evidence" value="ECO:0007669"/>
    <property type="project" value="UniProtKB-KW"/>
</dbReference>
<dbReference type="GO" id="GO:0016743">
    <property type="term" value="F:carboxyl- or carbamoyltransferase activity"/>
    <property type="evidence" value="ECO:0007669"/>
    <property type="project" value="UniProtKB-UniRule"/>
</dbReference>
<dbReference type="GO" id="GO:0008270">
    <property type="term" value="F:zinc ion binding"/>
    <property type="evidence" value="ECO:0007669"/>
    <property type="project" value="UniProtKB-UniRule"/>
</dbReference>
<dbReference type="GO" id="GO:0006633">
    <property type="term" value="P:fatty acid biosynthetic process"/>
    <property type="evidence" value="ECO:0007669"/>
    <property type="project" value="UniProtKB-KW"/>
</dbReference>
<dbReference type="GO" id="GO:2001295">
    <property type="term" value="P:malonyl-CoA biosynthetic process"/>
    <property type="evidence" value="ECO:0007669"/>
    <property type="project" value="UniProtKB-UniRule"/>
</dbReference>
<dbReference type="Gene3D" id="3.90.226.10">
    <property type="entry name" value="2-enoyl-CoA Hydratase, Chain A, domain 1"/>
    <property type="match status" value="1"/>
</dbReference>
<dbReference type="HAMAP" id="MF_01395">
    <property type="entry name" value="AcetylCoA_CT_beta"/>
    <property type="match status" value="1"/>
</dbReference>
<dbReference type="InterPro" id="IPR034733">
    <property type="entry name" value="AcCoA_carboxyl_beta"/>
</dbReference>
<dbReference type="InterPro" id="IPR000438">
    <property type="entry name" value="Acetyl_CoA_COase_Trfase_b_su"/>
</dbReference>
<dbReference type="InterPro" id="IPR029045">
    <property type="entry name" value="ClpP/crotonase-like_dom_sf"/>
</dbReference>
<dbReference type="InterPro" id="IPR011762">
    <property type="entry name" value="COA_CT_N"/>
</dbReference>
<dbReference type="NCBIfam" id="TIGR00515">
    <property type="entry name" value="accD"/>
    <property type="match status" value="1"/>
</dbReference>
<dbReference type="PANTHER" id="PTHR42995">
    <property type="entry name" value="ACETYL-COENZYME A CARBOXYLASE CARBOXYL TRANSFERASE SUBUNIT BETA, CHLOROPLASTIC"/>
    <property type="match status" value="1"/>
</dbReference>
<dbReference type="PANTHER" id="PTHR42995:SF5">
    <property type="entry name" value="ACETYL-COENZYME A CARBOXYLASE CARBOXYL TRANSFERASE SUBUNIT BETA, CHLOROPLASTIC"/>
    <property type="match status" value="1"/>
</dbReference>
<dbReference type="Pfam" id="PF01039">
    <property type="entry name" value="Carboxyl_trans"/>
    <property type="match status" value="1"/>
</dbReference>
<dbReference type="PRINTS" id="PR01070">
    <property type="entry name" value="ACCCTRFRASEB"/>
</dbReference>
<dbReference type="SUPFAM" id="SSF52096">
    <property type="entry name" value="ClpP/crotonase"/>
    <property type="match status" value="1"/>
</dbReference>
<dbReference type="PROSITE" id="PS50980">
    <property type="entry name" value="COA_CT_NTER"/>
    <property type="match status" value="1"/>
</dbReference>
<proteinExistence type="evidence at transcript level"/>
<keyword id="KW-0067">ATP-binding</keyword>
<keyword id="KW-0150">Chloroplast</keyword>
<keyword id="KW-0275">Fatty acid biosynthesis</keyword>
<keyword id="KW-0276">Fatty acid metabolism</keyword>
<keyword id="KW-0444">Lipid biosynthesis</keyword>
<keyword id="KW-0443">Lipid metabolism</keyword>
<keyword id="KW-0479">Metal-binding</keyword>
<keyword id="KW-0547">Nucleotide-binding</keyword>
<keyword id="KW-0934">Plastid</keyword>
<keyword id="KW-0691">RNA editing</keyword>
<keyword id="KW-0808">Transferase</keyword>
<keyword id="KW-0862">Zinc</keyword>
<keyword id="KW-0863">Zinc-finger</keyword>
<geneLocation type="chloroplast"/>
<name>ACCD_BRANA</name>
<accession>P48937</accession>
<sequence length="489" mass="55503">MEKSWFNLMFSKGELEYRGELSKAMDSFAPIEKTTISKDRFIYDMDKNFYGWGERSSYYNNVDLLVNSKDIRNFISDDTFFVRDSNKNSYSIYFDIEKKKFEINNDLSDLEIFFYSYCSSSYLNNRSKGDNDLHYDPYIKDTKYNCNNHINSCIDSYFRSHICINSHFLSDSNNSNESYIYNFICSESGSGKIRESKNDKIRTNSNRNNLMSSKDFDITKNYNQLWIQCDNCYGLKYKKVEMNVCEECGHYLKMTSSERIELLIDPGSWNGMDEDMVSADPIKFHSREEPYKKRIASAQKKTGLTDAIQTGTGQLNGIPVALGVMDFQFMGGSMGSVVGDKITRLIEYATNQCLPLILVCSSGGARMQEGSLSLMQMAKISSVLCDYQSSKKLFYISILTSPTTGGVTASLGMLGDIIIAEPYAYIAFAGKRVIEQTLKKAVPEGSQAAESLLRKGLLDAIVPRNPLKGVVSELFQLHAFFPLNKNEIK</sequence>
<organism>
    <name type="scientific">Brassica napus</name>
    <name type="common">Rape</name>
    <dbReference type="NCBI Taxonomy" id="3708"/>
    <lineage>
        <taxon>Eukaryota</taxon>
        <taxon>Viridiplantae</taxon>
        <taxon>Streptophyta</taxon>
        <taxon>Embryophyta</taxon>
        <taxon>Tracheophyta</taxon>
        <taxon>Spermatophyta</taxon>
        <taxon>Magnoliopsida</taxon>
        <taxon>eudicotyledons</taxon>
        <taxon>Gunneridae</taxon>
        <taxon>Pentapetalae</taxon>
        <taxon>rosids</taxon>
        <taxon>malvids</taxon>
        <taxon>Brassicales</taxon>
        <taxon>Brassicaceae</taxon>
        <taxon>Brassiceae</taxon>
        <taxon>Brassica</taxon>
    </lineage>
</organism>
<protein>
    <recommendedName>
        <fullName evidence="2">Acetyl-coenzyme A carboxylase carboxyl transferase subunit beta, chloroplastic</fullName>
        <shortName evidence="2">ACCase subunit beta</shortName>
        <shortName evidence="2">Acetyl-CoA carboxylase carboxyltransferase subunit beta</shortName>
        <ecNumber evidence="2">2.1.3.15</ecNumber>
    </recommendedName>
</protein>
<gene>
    <name evidence="2" type="primary">accD</name>
</gene>